<protein>
    <recommendedName>
        <fullName evidence="1">Large ribosomal subunit protein bL25</fullName>
    </recommendedName>
    <alternativeName>
        <fullName evidence="3">50S ribosomal protein L25</fullName>
    </alternativeName>
    <alternativeName>
        <fullName evidence="1">General stress protein CTC</fullName>
    </alternativeName>
</protein>
<proteinExistence type="inferred from homology"/>
<comment type="function">
    <text evidence="1">This is one of the proteins that binds to the 5S RNA in the ribosome where it forms part of the central protuberance.</text>
</comment>
<comment type="subunit">
    <text evidence="1">Part of the 50S ribosomal subunit; part of the 5S rRNA/L5/L18/L25 subcomplex. Contacts the 5S rRNA. Binds to the 5S rRNA independently of L5 and L18.</text>
</comment>
<comment type="similarity">
    <text evidence="1">Belongs to the bacterial ribosomal protein bL25 family. CTC subfamily.</text>
</comment>
<dbReference type="EMBL" id="CP000264">
    <property type="protein sequence ID" value="ABD56513.1"/>
    <property type="molecule type" value="Genomic_DNA"/>
</dbReference>
<dbReference type="RefSeq" id="WP_011456713.1">
    <property type="nucleotide sequence ID" value="NC_007802.1"/>
</dbReference>
<dbReference type="SMR" id="Q28L99"/>
<dbReference type="STRING" id="290400.Jann_3596"/>
<dbReference type="KEGG" id="jan:Jann_3596"/>
<dbReference type="eggNOG" id="COG1825">
    <property type="taxonomic scope" value="Bacteria"/>
</dbReference>
<dbReference type="HOGENOM" id="CLU_075939_0_0_5"/>
<dbReference type="OrthoDB" id="9806411at2"/>
<dbReference type="Proteomes" id="UP000008326">
    <property type="component" value="Chromosome"/>
</dbReference>
<dbReference type="GO" id="GO:0022625">
    <property type="term" value="C:cytosolic large ribosomal subunit"/>
    <property type="evidence" value="ECO:0007669"/>
    <property type="project" value="TreeGrafter"/>
</dbReference>
<dbReference type="GO" id="GO:0008097">
    <property type="term" value="F:5S rRNA binding"/>
    <property type="evidence" value="ECO:0007669"/>
    <property type="project" value="InterPro"/>
</dbReference>
<dbReference type="GO" id="GO:0003735">
    <property type="term" value="F:structural constituent of ribosome"/>
    <property type="evidence" value="ECO:0007669"/>
    <property type="project" value="InterPro"/>
</dbReference>
<dbReference type="GO" id="GO:0006412">
    <property type="term" value="P:translation"/>
    <property type="evidence" value="ECO:0007669"/>
    <property type="project" value="UniProtKB-UniRule"/>
</dbReference>
<dbReference type="CDD" id="cd00495">
    <property type="entry name" value="Ribosomal_L25_TL5_CTC"/>
    <property type="match status" value="1"/>
</dbReference>
<dbReference type="Gene3D" id="2.170.120.20">
    <property type="entry name" value="Ribosomal protein L25, beta domain"/>
    <property type="match status" value="1"/>
</dbReference>
<dbReference type="Gene3D" id="2.40.240.10">
    <property type="entry name" value="Ribosomal Protein L25, Chain P"/>
    <property type="match status" value="1"/>
</dbReference>
<dbReference type="HAMAP" id="MF_01334">
    <property type="entry name" value="Ribosomal_bL25_CTC"/>
    <property type="match status" value="1"/>
</dbReference>
<dbReference type="InterPro" id="IPR020056">
    <property type="entry name" value="Rbsml_bL25/Gln-tRNA_synth_N"/>
</dbReference>
<dbReference type="InterPro" id="IPR011035">
    <property type="entry name" value="Ribosomal_bL25/Gln-tRNA_synth"/>
</dbReference>
<dbReference type="InterPro" id="IPR020057">
    <property type="entry name" value="Ribosomal_bL25_b-dom"/>
</dbReference>
<dbReference type="InterPro" id="IPR037121">
    <property type="entry name" value="Ribosomal_bL25_C"/>
</dbReference>
<dbReference type="InterPro" id="IPR001021">
    <property type="entry name" value="Ribosomal_bL25_long"/>
</dbReference>
<dbReference type="InterPro" id="IPR029751">
    <property type="entry name" value="Ribosomal_L25_dom"/>
</dbReference>
<dbReference type="InterPro" id="IPR020930">
    <property type="entry name" value="Ribosomal_uL5_bac-type"/>
</dbReference>
<dbReference type="NCBIfam" id="TIGR00731">
    <property type="entry name" value="bL25_bact_ctc"/>
    <property type="match status" value="1"/>
</dbReference>
<dbReference type="NCBIfam" id="NF004128">
    <property type="entry name" value="PRK05618.1-2"/>
    <property type="match status" value="1"/>
</dbReference>
<dbReference type="PANTHER" id="PTHR33284">
    <property type="entry name" value="RIBOSOMAL PROTEIN L25/GLN-TRNA SYNTHETASE, ANTI-CODON-BINDING DOMAIN-CONTAINING PROTEIN"/>
    <property type="match status" value="1"/>
</dbReference>
<dbReference type="PANTHER" id="PTHR33284:SF1">
    <property type="entry name" value="RIBOSOMAL PROTEIN L25_GLN-TRNA SYNTHETASE, ANTI-CODON-BINDING DOMAIN-CONTAINING PROTEIN"/>
    <property type="match status" value="1"/>
</dbReference>
<dbReference type="Pfam" id="PF01386">
    <property type="entry name" value="Ribosomal_L25p"/>
    <property type="match status" value="1"/>
</dbReference>
<dbReference type="Pfam" id="PF14693">
    <property type="entry name" value="Ribosomal_TL5_C"/>
    <property type="match status" value="1"/>
</dbReference>
<dbReference type="SUPFAM" id="SSF50715">
    <property type="entry name" value="Ribosomal protein L25-like"/>
    <property type="match status" value="1"/>
</dbReference>
<organism>
    <name type="scientific">Jannaschia sp. (strain CCS1)</name>
    <dbReference type="NCBI Taxonomy" id="290400"/>
    <lineage>
        <taxon>Bacteria</taxon>
        <taxon>Pseudomonadati</taxon>
        <taxon>Pseudomonadota</taxon>
        <taxon>Alphaproteobacteria</taxon>
        <taxon>Rhodobacterales</taxon>
        <taxon>Roseobacteraceae</taxon>
        <taxon>Jannaschia</taxon>
    </lineage>
</organism>
<accession>Q28L99</accession>
<reference key="1">
    <citation type="submission" date="2006-02" db="EMBL/GenBank/DDBJ databases">
        <title>Complete sequence of chromosome of Jannaschia sp. CCS1.</title>
        <authorList>
            <consortium name="US DOE Joint Genome Institute"/>
            <person name="Copeland A."/>
            <person name="Lucas S."/>
            <person name="Lapidus A."/>
            <person name="Barry K."/>
            <person name="Detter J.C."/>
            <person name="Glavina del Rio T."/>
            <person name="Hammon N."/>
            <person name="Israni S."/>
            <person name="Pitluck S."/>
            <person name="Brettin T."/>
            <person name="Bruce D."/>
            <person name="Han C."/>
            <person name="Tapia R."/>
            <person name="Gilna P."/>
            <person name="Chertkov O."/>
            <person name="Saunders E."/>
            <person name="Schmutz J."/>
            <person name="Larimer F."/>
            <person name="Land M."/>
            <person name="Kyrpides N."/>
            <person name="Lykidis A."/>
            <person name="Moran M.A."/>
            <person name="Belas R."/>
            <person name="Ye W."/>
            <person name="Buchan A."/>
            <person name="Gonzalez J.M."/>
            <person name="Schell M.A."/>
            <person name="Richardson P."/>
        </authorList>
    </citation>
    <scope>NUCLEOTIDE SEQUENCE [LARGE SCALE GENOMIC DNA]</scope>
    <source>
        <strain>CCS1</strain>
    </source>
</reference>
<evidence type="ECO:0000255" key="1">
    <source>
        <dbReference type="HAMAP-Rule" id="MF_01334"/>
    </source>
</evidence>
<evidence type="ECO:0000256" key="2">
    <source>
        <dbReference type="SAM" id="MobiDB-lite"/>
    </source>
</evidence>
<evidence type="ECO:0000305" key="3"/>
<keyword id="KW-1185">Reference proteome</keyword>
<keyword id="KW-0687">Ribonucleoprotein</keyword>
<keyword id="KW-0689">Ribosomal protein</keyword>
<keyword id="KW-0694">RNA-binding</keyword>
<keyword id="KW-0699">rRNA-binding</keyword>
<sequence length="216" mass="23158">MAGEIPDLIAEARTGTGKGAARQARREGNVPGIVYGGGIDPLAINIPFNVLLKRLKDGRFLSTLFNMKVEGQDDVRVICRNVQRDVVKDLPTHVDFMRLKRTSKIALFIPVEVIGEEECPGLKKGGVLTMVRPEVELRVTAGDIPEQITIDLTGLEIGDTVTISSVELPAGAKATIDRDFVIANLTAPSGLVSAESEEDEDAPAADEVPATEVSEE</sequence>
<feature type="chain" id="PRO_0000244214" description="Large ribosomal subunit protein bL25">
    <location>
        <begin position="1"/>
        <end position="216"/>
    </location>
</feature>
<feature type="region of interest" description="Disordered" evidence="2">
    <location>
        <begin position="191"/>
        <end position="216"/>
    </location>
</feature>
<feature type="compositionally biased region" description="Acidic residues" evidence="2">
    <location>
        <begin position="195"/>
        <end position="204"/>
    </location>
</feature>
<gene>
    <name evidence="1" type="primary">rplY</name>
    <name evidence="1" type="synonym">ctc</name>
    <name type="ordered locus">Jann_3596</name>
</gene>
<name>RL25_JANSC</name>